<gene>
    <name type="primary">Dach1</name>
    <name type="synonym">Dach</name>
</gene>
<keyword id="KW-0010">Activator</keyword>
<keyword id="KW-0025">Alternative splicing</keyword>
<keyword id="KW-0175">Coiled coil</keyword>
<keyword id="KW-0217">Developmental protein</keyword>
<keyword id="KW-0238">DNA-binding</keyword>
<keyword id="KW-0539">Nucleus</keyword>
<keyword id="KW-0597">Phosphoprotein</keyword>
<keyword id="KW-1185">Reference proteome</keyword>
<keyword id="KW-0678">Repressor</keyword>
<keyword id="KW-0804">Transcription</keyword>
<keyword id="KW-0805">Transcription regulation</keyword>
<proteinExistence type="evidence at protein level"/>
<comment type="function">
    <text evidence="1 6 7 8">Transcription factor that is involved in regulation of organogenesis. Seems to be a regulator of SIX1, SIX6 and probably SIX5. Corepression of precursor cell proliferation in myoblasts by SIX1 is switched to coactivation through recruitment of EYA3 to the SIX1-DACH1 complex. Transcriptional activation also seems to involve association of CREBBP. Seems to act as a corepressor of SIX6 in regulating proliferation by directly repressing cyclin-dependent kinase inhibitors, including the p27Kip1 promoter. Inhibits TGF-beta signaling through interaction with SMAD4 and NCOR1 (By similarity). Binds to chromatin DNA via its DACHbox-N domain.</text>
</comment>
<comment type="subunit">
    <text evidence="1">Interacts with SIX1, SIX6 and EYA3. Interacts with NCOR1 and HDAC3 through its N-terminus. Interacts with SIN3A through its C-terminus. Interacts with SMAD3 and SMAD4 (By similarity).</text>
</comment>
<comment type="interaction">
    <interactant intactId="EBI-348961">
        <id>Q9QYB2</id>
    </interactant>
    <interactant intactId="EBI-349004">
        <id>Q60974</id>
        <label>Ncor1</label>
    </interactant>
    <organismsDiffer>false</organismsDiffer>
    <experiments>2</experiments>
</comment>
<comment type="subcellular location">
    <subcellularLocation>
        <location evidence="1">Nucleus</location>
    </subcellularLocation>
</comment>
<comment type="alternative products">
    <event type="alternative splicing"/>
    <isoform>
        <id>Q9QYB2-1</id>
        <name>1</name>
        <sequence type="displayed"/>
    </isoform>
    <isoform>
        <id>Q9QYB2-2</id>
        <name>2</name>
        <sequence type="described" ref="VSP_009489"/>
    </isoform>
</comment>
<comment type="tissue specificity">
    <text evidence="4 5">Expressed at higher levels in adult kidney and lung, and at lower levels in brain and testis. Expressed in embryonal kidneys, eyes, cochleae and limb buds.</text>
</comment>
<comment type="developmental stage">
    <text evidence="4 5 9 10">Highest expression was found at 11.5 dpc, and expression rapidly declines at later stages of the development. Between 8.0 and 13.5 dpc is found in neural crest cells during their pre-migratory, migratory, and, in some cases post-migratory phase throughout the body axis. Also found in lateral mesenchyme of trunk and head. At 10 and 12 dpc found in mesonephric tubules. At 16 dpc found in epithalial cells of metanephric 'comma' and 'S'-shaped bodies, in mesenchymal cells of the medulla and the cortex. Colocalized to the nucleus of glomerular podocytes and epithelial cells lining many of the convoluted tubes. At 10.5 dpc found in both the anterior and posterior of the limb bud. At 11.5 dpc expression becomes increasingly peripheral, extending around the entire handplate in the mesenchymal cells underlying the apical ectodermal ridge. At 12.5 dpc expression is entirely peripheral an by 13.5 dpc is localized to the mesenchyme at the distal tips of the digits. At 10 dpc found in cells of the optic cup and in some cells surrounding the eye. At 12 dpc found in developing lens fibers, the ectoderm overlaying the developing eye and less intensely in the retina. At 12 dpc found in cells of the dorsomedial and dorsolateral epithelium of the otic vesicle. At later stages expressed in only a few specialized cell types of the cochlear duct, including the inner and outer hair cells, stria vascularis, and the mesenchymal cells directly underlying the organ of Corti. From 10.5 to 12.5 dpc expressed in the telencephalon including the olfactory bulbs, throughout the length of the neural tube and within the dorsal root ganglia, in cranial ganglia in the trigeminal ganglion and the glossopharyngeal-vagal ganglion complex. At 10.5 and 11.5 dpc expressed in punctate pattern on the ventral side of the embryo between the fore and hind limbs, the rib primordia; this expression disappears by 12.5 dpc. At 11.5 and 12.5 dpc found in genital eminence.</text>
</comment>
<comment type="domain">
    <text evidence="1">The DACHbox-N/DD1 domain forms a structure containing a DNA binding motif similar to that of the forkhead/winged helix domain.</text>
</comment>
<comment type="similarity">
    <text evidence="15">Belongs to the DACH/dachshund family.</text>
</comment>
<comment type="sequence caution" evidence="15">
    <conflict type="erroneous initiation">
        <sequence resource="EMBL-CDS" id="CAA06665"/>
    </conflict>
</comment>
<organism>
    <name type="scientific">Mus musculus</name>
    <name type="common">Mouse</name>
    <dbReference type="NCBI Taxonomy" id="10090"/>
    <lineage>
        <taxon>Eukaryota</taxon>
        <taxon>Metazoa</taxon>
        <taxon>Chordata</taxon>
        <taxon>Craniata</taxon>
        <taxon>Vertebrata</taxon>
        <taxon>Euteleostomi</taxon>
        <taxon>Mammalia</taxon>
        <taxon>Eutheria</taxon>
        <taxon>Euarchontoglires</taxon>
        <taxon>Glires</taxon>
        <taxon>Rodentia</taxon>
        <taxon>Myomorpha</taxon>
        <taxon>Muroidea</taxon>
        <taxon>Muridae</taxon>
        <taxon>Murinae</taxon>
        <taxon>Mus</taxon>
        <taxon>Mus</taxon>
    </lineage>
</organism>
<evidence type="ECO:0000250" key="1"/>
<evidence type="ECO:0000255" key="2"/>
<evidence type="ECO:0000256" key="3">
    <source>
        <dbReference type="SAM" id="MobiDB-lite"/>
    </source>
</evidence>
<evidence type="ECO:0000269" key="4">
    <source>
    </source>
</evidence>
<evidence type="ECO:0000269" key="5">
    <source>
    </source>
</evidence>
<evidence type="ECO:0000269" key="6">
    <source>
    </source>
</evidence>
<evidence type="ECO:0000269" key="7">
    <source>
    </source>
</evidence>
<evidence type="ECO:0000269" key="8">
    <source>
    </source>
</evidence>
<evidence type="ECO:0000269" key="9">
    <source>
    </source>
</evidence>
<evidence type="ECO:0000269" key="10">
    <source>
    </source>
</evidence>
<evidence type="ECO:0000303" key="11">
    <source>
    </source>
</evidence>
<evidence type="ECO:0000303" key="12">
    <source>
    </source>
</evidence>
<evidence type="ECO:0000303" key="13">
    <source>
    </source>
</evidence>
<evidence type="ECO:0000303" key="14">
    <source>
    </source>
</evidence>
<evidence type="ECO:0000305" key="15"/>
<evidence type="ECO:0007744" key="16">
    <source>
    </source>
</evidence>
<protein>
    <recommendedName>
        <fullName>Dachshund homolog 1</fullName>
        <shortName>Dach1</shortName>
    </recommendedName>
</protein>
<accession>Q9QYB2</accession>
<accession>B2RUG1</accession>
<accession>O88716</accession>
<accession>Q8BPQ0</accession>
<accession>Q8C8D7</accession>
<accession>Q9QY47</accession>
<accession>Q9R218</accession>
<accession>Q9Z0Y5</accession>
<name>DACH1_MOUSE</name>
<feature type="chain" id="PRO_0000095598" description="Dachshund homolog 1">
    <location>
        <begin position="1"/>
        <end position="751"/>
    </location>
</feature>
<feature type="region of interest" description="Disordered" evidence="3">
    <location>
        <begin position="1"/>
        <end position="178"/>
    </location>
</feature>
<feature type="region of interest" description="Interaction with SIX6 and HDAC3" evidence="6">
    <location>
        <begin position="182"/>
        <end position="377"/>
    </location>
</feature>
<feature type="region of interest" description="DACHbox-N">
    <location>
        <begin position="182"/>
        <end position="268"/>
    </location>
</feature>
<feature type="region of interest" description="Disordered" evidence="3">
    <location>
        <begin position="273"/>
        <end position="295"/>
    </location>
</feature>
<feature type="region of interest" description="Disordered" evidence="3">
    <location>
        <begin position="351"/>
        <end position="393"/>
    </location>
</feature>
<feature type="region of interest" description="Disordered" evidence="3">
    <location>
        <begin position="467"/>
        <end position="525"/>
    </location>
</feature>
<feature type="region of interest" description="Disordered" evidence="3">
    <location>
        <begin position="537"/>
        <end position="556"/>
    </location>
</feature>
<feature type="region of interest" description="DACHbox-C">
    <location>
        <begin position="609"/>
        <end position="689"/>
    </location>
</feature>
<feature type="region of interest" description="Interaction with SIN3A" evidence="6">
    <location>
        <begin position="620"/>
        <end position="699"/>
    </location>
</feature>
<feature type="coiled-coil region" evidence="2">
    <location>
        <begin position="623"/>
        <end position="711"/>
    </location>
</feature>
<feature type="compositionally biased region" description="Low complexity" evidence="3">
    <location>
        <begin position="20"/>
        <end position="53"/>
    </location>
</feature>
<feature type="compositionally biased region" description="Low complexity" evidence="3">
    <location>
        <begin position="61"/>
        <end position="74"/>
    </location>
</feature>
<feature type="compositionally biased region" description="Gly residues" evidence="3">
    <location>
        <begin position="75"/>
        <end position="97"/>
    </location>
</feature>
<feature type="compositionally biased region" description="Gly residues" evidence="3">
    <location>
        <begin position="107"/>
        <end position="119"/>
    </location>
</feature>
<feature type="compositionally biased region" description="Low complexity" evidence="3">
    <location>
        <begin position="120"/>
        <end position="156"/>
    </location>
</feature>
<feature type="compositionally biased region" description="Polar residues" evidence="3">
    <location>
        <begin position="167"/>
        <end position="178"/>
    </location>
</feature>
<feature type="compositionally biased region" description="Polar residues" evidence="3">
    <location>
        <begin position="285"/>
        <end position="294"/>
    </location>
</feature>
<feature type="compositionally biased region" description="Polar residues" evidence="3">
    <location>
        <begin position="351"/>
        <end position="369"/>
    </location>
</feature>
<feature type="compositionally biased region" description="Low complexity" evidence="3">
    <location>
        <begin position="499"/>
        <end position="517"/>
    </location>
</feature>
<feature type="modified residue" description="Phosphoserine" evidence="16">
    <location>
        <position position="484"/>
    </location>
</feature>
<feature type="splice variant" id="VSP_009489" description="In isoform 2." evidence="11 12 13 14">
    <location>
        <begin position="370"/>
        <end position="421"/>
    </location>
</feature>
<feature type="sequence conflict" description="In Ref. 2; AAD16097/AAD16098." evidence="15" ref="2">
    <original>S</original>
    <variation>Y</variation>
    <location>
        <position position="62"/>
    </location>
</feature>
<feature type="sequence conflict" description="In Ref. 5; BAC33046." evidence="15" ref="5">
    <original>K</original>
    <variation>E</variation>
    <location>
        <position position="227"/>
    </location>
</feature>
<feature type="sequence conflict" description="In Ref. 2; CAA06665." evidence="15" ref="2">
    <original>A</original>
    <variation>T</variation>
    <location>
        <position position="393"/>
    </location>
</feature>
<dbReference type="EMBL" id="AF102547">
    <property type="protein sequence ID" value="AAF04742.1"/>
    <property type="molecule type" value="mRNA"/>
</dbReference>
<dbReference type="EMBL" id="AF090436">
    <property type="protein sequence ID" value="AAD16097.1"/>
    <property type="molecule type" value="mRNA"/>
</dbReference>
<dbReference type="EMBL" id="AF090437">
    <property type="protein sequence ID" value="AAD16098.1"/>
    <property type="molecule type" value="mRNA"/>
</dbReference>
<dbReference type="EMBL" id="AF129510">
    <property type="protein sequence ID" value="AAF22955.1"/>
    <property type="molecule type" value="mRNA"/>
</dbReference>
<dbReference type="EMBL" id="BC141130">
    <property type="protein sequence ID" value="AAI41131.1"/>
    <property type="molecule type" value="mRNA"/>
</dbReference>
<dbReference type="EMBL" id="AK053594">
    <property type="protein sequence ID" value="BAC35441.1"/>
    <property type="molecule type" value="mRNA"/>
</dbReference>
<dbReference type="EMBL" id="AK047409">
    <property type="protein sequence ID" value="BAC33046.1"/>
    <property type="molecule type" value="mRNA"/>
</dbReference>
<dbReference type="EMBL" id="AJ005669">
    <property type="protein sequence ID" value="CAA06665.1"/>
    <property type="status" value="ALT_INIT"/>
    <property type="molecule type" value="mRNA"/>
</dbReference>
<dbReference type="CCDS" id="CCDS36993.1">
    <molecule id="Q9QYB2-2"/>
</dbReference>
<dbReference type="CCDS" id="CCDS36994.1">
    <molecule id="Q9QYB2-1"/>
</dbReference>
<dbReference type="RefSeq" id="NP_001033699.1">
    <molecule id="Q9QYB2-2"/>
    <property type="nucleotide sequence ID" value="NM_001038610.3"/>
</dbReference>
<dbReference type="RefSeq" id="NP_031852.1">
    <molecule id="Q9QYB2-1"/>
    <property type="nucleotide sequence ID" value="NM_007826.4"/>
</dbReference>
<dbReference type="SMR" id="Q9QYB2"/>
<dbReference type="BioGRID" id="199044">
    <property type="interactions" value="8"/>
</dbReference>
<dbReference type="CORUM" id="Q9QYB2"/>
<dbReference type="FunCoup" id="Q9QYB2">
    <property type="interactions" value="1803"/>
</dbReference>
<dbReference type="IntAct" id="Q9QYB2">
    <property type="interactions" value="5"/>
</dbReference>
<dbReference type="STRING" id="10090.ENSMUSP00000071464"/>
<dbReference type="GlyGen" id="Q9QYB2">
    <property type="glycosylation" value="1 site"/>
</dbReference>
<dbReference type="iPTMnet" id="Q9QYB2"/>
<dbReference type="PhosphoSitePlus" id="Q9QYB2"/>
<dbReference type="PaxDb" id="10090-ENSMUSP00000071464"/>
<dbReference type="ProteomicsDB" id="279309">
    <molecule id="Q9QYB2-1"/>
</dbReference>
<dbReference type="ProteomicsDB" id="279310">
    <molecule id="Q9QYB2-2"/>
</dbReference>
<dbReference type="Antibodypedia" id="72801">
    <property type="antibodies" value="313 antibodies from 36 providers"/>
</dbReference>
<dbReference type="DNASU" id="13134"/>
<dbReference type="Ensembl" id="ENSMUST00000069334.8">
    <molecule id="Q9QYB2-2"/>
    <property type="protein sequence ID" value="ENSMUSP00000064970.8"/>
    <property type="gene ID" value="ENSMUSG00000055639.17"/>
</dbReference>
<dbReference type="Ensembl" id="ENSMUST00000071533.13">
    <molecule id="Q9QYB2-1"/>
    <property type="protein sequence ID" value="ENSMUSP00000071464.7"/>
    <property type="gene ID" value="ENSMUSG00000055639.17"/>
</dbReference>
<dbReference type="GeneID" id="13134"/>
<dbReference type="KEGG" id="mmu:13134"/>
<dbReference type="UCSC" id="uc007uur.2">
    <molecule id="Q9QYB2-1"/>
    <property type="organism name" value="mouse"/>
</dbReference>
<dbReference type="UCSC" id="uc007uus.2">
    <molecule id="Q9QYB2-2"/>
    <property type="organism name" value="mouse"/>
</dbReference>
<dbReference type="AGR" id="MGI:1277991"/>
<dbReference type="CTD" id="1602"/>
<dbReference type="MGI" id="MGI:1277991">
    <property type="gene designation" value="Dach1"/>
</dbReference>
<dbReference type="VEuPathDB" id="HostDB:ENSMUSG00000055639"/>
<dbReference type="eggNOG" id="KOG3915">
    <property type="taxonomic scope" value="Eukaryota"/>
</dbReference>
<dbReference type="GeneTree" id="ENSGT00390000001134"/>
<dbReference type="HOGENOM" id="CLU_027923_0_0_1"/>
<dbReference type="InParanoid" id="Q9QYB2"/>
<dbReference type="OMA" id="MGHEAKR"/>
<dbReference type="OrthoDB" id="6436112at2759"/>
<dbReference type="PhylomeDB" id="Q9QYB2"/>
<dbReference type="TreeFam" id="TF316697"/>
<dbReference type="BioGRID-ORCS" id="13134">
    <property type="hits" value="0 hits in 77 CRISPR screens"/>
</dbReference>
<dbReference type="ChiTaRS" id="Dach1">
    <property type="organism name" value="mouse"/>
</dbReference>
<dbReference type="PRO" id="PR:Q9QYB2"/>
<dbReference type="Proteomes" id="UP000000589">
    <property type="component" value="Chromosome 14"/>
</dbReference>
<dbReference type="RNAct" id="Q9QYB2">
    <property type="molecule type" value="protein"/>
</dbReference>
<dbReference type="Bgee" id="ENSMUSG00000055639">
    <property type="expression patterns" value="Expressed in ureter smooth muscle and 292 other cell types or tissues"/>
</dbReference>
<dbReference type="GO" id="GO:0005737">
    <property type="term" value="C:cytoplasm"/>
    <property type="evidence" value="ECO:0000314"/>
    <property type="project" value="MGI"/>
</dbReference>
<dbReference type="GO" id="GO:0005829">
    <property type="term" value="C:cytosol"/>
    <property type="evidence" value="ECO:0007669"/>
    <property type="project" value="Ensembl"/>
</dbReference>
<dbReference type="GO" id="GO:0005794">
    <property type="term" value="C:Golgi apparatus"/>
    <property type="evidence" value="ECO:0007669"/>
    <property type="project" value="Ensembl"/>
</dbReference>
<dbReference type="GO" id="GO:0016607">
    <property type="term" value="C:nuclear speck"/>
    <property type="evidence" value="ECO:0007669"/>
    <property type="project" value="Ensembl"/>
</dbReference>
<dbReference type="GO" id="GO:0005634">
    <property type="term" value="C:nucleus"/>
    <property type="evidence" value="ECO:0000314"/>
    <property type="project" value="MGI"/>
</dbReference>
<dbReference type="GO" id="GO:0005667">
    <property type="term" value="C:transcription regulator complex"/>
    <property type="evidence" value="ECO:0000314"/>
    <property type="project" value="MGI"/>
</dbReference>
<dbReference type="GO" id="GO:0003700">
    <property type="term" value="F:DNA-binding transcription factor activity"/>
    <property type="evidence" value="ECO:0000314"/>
    <property type="project" value="MGI"/>
</dbReference>
<dbReference type="GO" id="GO:0000981">
    <property type="term" value="F:DNA-binding transcription factor activity, RNA polymerase II-specific"/>
    <property type="evidence" value="ECO:0000314"/>
    <property type="project" value="MGI"/>
</dbReference>
<dbReference type="GO" id="GO:0001227">
    <property type="term" value="F:DNA-binding transcription repressor activity, RNA polymerase II-specific"/>
    <property type="evidence" value="ECO:0007669"/>
    <property type="project" value="Ensembl"/>
</dbReference>
<dbReference type="GO" id="GO:0000978">
    <property type="term" value="F:RNA polymerase II cis-regulatory region sequence-specific DNA binding"/>
    <property type="evidence" value="ECO:0007669"/>
    <property type="project" value="Ensembl"/>
</dbReference>
<dbReference type="GO" id="GO:0046545">
    <property type="term" value="P:development of primary female sexual characteristics"/>
    <property type="evidence" value="ECO:0000316"/>
    <property type="project" value="MGI"/>
</dbReference>
<dbReference type="GO" id="GO:0050673">
    <property type="term" value="P:epithelial cell proliferation"/>
    <property type="evidence" value="ECO:0000315"/>
    <property type="project" value="MGI"/>
</dbReference>
<dbReference type="GO" id="GO:0030336">
    <property type="term" value="P:negative regulation of cell migration"/>
    <property type="evidence" value="ECO:0007669"/>
    <property type="project" value="Ensembl"/>
</dbReference>
<dbReference type="GO" id="GO:0060244">
    <property type="term" value="P:negative regulation of cell proliferation involved in contact inhibition"/>
    <property type="evidence" value="ECO:0000316"/>
    <property type="project" value="MGI"/>
</dbReference>
<dbReference type="GO" id="GO:2000279">
    <property type="term" value="P:negative regulation of DNA biosynthetic process"/>
    <property type="evidence" value="ECO:0007669"/>
    <property type="project" value="Ensembl"/>
</dbReference>
<dbReference type="GO" id="GO:0048147">
    <property type="term" value="P:negative regulation of fibroblast proliferation"/>
    <property type="evidence" value="ECO:0000314"/>
    <property type="project" value="MGI"/>
</dbReference>
<dbReference type="GO" id="GO:0010944">
    <property type="term" value="P:negative regulation of transcription by competitive promoter binding"/>
    <property type="evidence" value="ECO:0007669"/>
    <property type="project" value="Ensembl"/>
</dbReference>
<dbReference type="GO" id="GO:0000122">
    <property type="term" value="P:negative regulation of transcription by RNA polymerase II"/>
    <property type="evidence" value="ECO:0000314"/>
    <property type="project" value="MGI"/>
</dbReference>
<dbReference type="GO" id="GO:0006355">
    <property type="term" value="P:regulation of DNA-templated transcription"/>
    <property type="evidence" value="ECO:0000314"/>
    <property type="project" value="MGI"/>
</dbReference>
<dbReference type="GO" id="GO:0033262">
    <property type="term" value="P:regulation of nuclear cell cycle DNA replication"/>
    <property type="evidence" value="ECO:0000315"/>
    <property type="project" value="CACAO"/>
</dbReference>
<dbReference type="GO" id="GO:0007585">
    <property type="term" value="P:respiratory gaseous exchange by respiratory system"/>
    <property type="evidence" value="ECO:0000315"/>
    <property type="project" value="MGI"/>
</dbReference>
<dbReference type="GO" id="GO:0001967">
    <property type="term" value="P:suckling behavior"/>
    <property type="evidence" value="ECO:0000315"/>
    <property type="project" value="MGI"/>
</dbReference>
<dbReference type="GO" id="GO:0044342">
    <property type="term" value="P:type B pancreatic cell proliferation"/>
    <property type="evidence" value="ECO:0000315"/>
    <property type="project" value="MGI"/>
</dbReference>
<dbReference type="CDD" id="cd21081">
    <property type="entry name" value="DHD_Dac"/>
    <property type="match status" value="1"/>
</dbReference>
<dbReference type="FunFam" id="3.10.260.20:FF:000001">
    <property type="entry name" value="Dachshund homolog 1"/>
    <property type="match status" value="1"/>
</dbReference>
<dbReference type="Gene3D" id="3.10.260.20">
    <property type="entry name" value="Ski"/>
    <property type="match status" value="1"/>
</dbReference>
<dbReference type="InterPro" id="IPR052417">
    <property type="entry name" value="Dachshund_domain"/>
</dbReference>
<dbReference type="InterPro" id="IPR009061">
    <property type="entry name" value="DNA-bd_dom_put_sf"/>
</dbReference>
<dbReference type="InterPro" id="IPR003380">
    <property type="entry name" value="SKI/SNO/DAC"/>
</dbReference>
<dbReference type="InterPro" id="IPR037000">
    <property type="entry name" value="Ski_DNA-bd_sf"/>
</dbReference>
<dbReference type="PANTHER" id="PTHR12577">
    <property type="entry name" value="DACHSHUND"/>
    <property type="match status" value="1"/>
</dbReference>
<dbReference type="PANTHER" id="PTHR12577:SF14">
    <property type="entry name" value="DACHSHUND HOMOLOG 1"/>
    <property type="match status" value="1"/>
</dbReference>
<dbReference type="Pfam" id="PF02437">
    <property type="entry name" value="Ski_Sno_DHD"/>
    <property type="match status" value="1"/>
</dbReference>
<dbReference type="SUPFAM" id="SSF46955">
    <property type="entry name" value="Putative DNA-binding domain"/>
    <property type="match status" value="1"/>
</dbReference>
<sequence>MAVPAALIPPTQLVPPQPPISTSASSSGTTTSTSSATSSPAPSIGPPASSGPTLFRPEPIASSASSSAAATVTSPGGGGGGSGGGGGSGGNGGGGGSNCNPSLAAGSSGGGVSAGGGGASSTPITASTGSSSSSSSSSSSSSSSSSSSSSSSSSSSCGPLPGKPVYSTPSPVENTPQNNECKMVDLRGAKVASFTVEGCELICLPQAFDLFLKHLVGGLHTVYTKLKRLEITPVVCNVEQVRILRGLGAIQPGVNRCKLISRKDFETLYNDCTNASSRPGRPPKRTQSVTSPENSHIMPHSVPGLMSPGIIPPTGLTAAAAAAAAATNAAIAEAMKVKKIKLEAMSNYHASNNQHGADSENGDMNSSVGSSGGSWDKETLHSPPSQGSQAPVAHARMPAAFSLPVSHPLNHLQHSHLPPNGLELPFMMMPHPLIPVSLPPASVTMAMSQMNHLSTIANMAAAAQVQSPPSRVETSVIKERVPDSPSPAPSLEEGRRPGSHPSSHRSSSVSSSPARTESSSDRIPVHQNGLSMNQMLMGLSPNVLPGPKEGDLAGHDMGHESKRIHIEKDETPLSTPTARDSIDKLSLTGHGQPLPPGFPSPFLFPDGLSSIETLLTNIQGLLKVAIDNARAQEKQVQLEKTELKMDFLRERELRETLEKQLAMEQKNRAIVQKRLKKEKKAKRKLQEALEFETKRREQAEQTLKQAASADSLRVLNDSLTPEIEADRSGGRADAERTIQDGRLYLKTTVMY</sequence>
<reference key="1">
    <citation type="journal article" date="1999" name="Dev. Genes Evol.">
        <title>Molecular cloning and expression of the human and mouse homologues of the Drosophila dachshund gene.</title>
        <authorList>
            <person name="Kozmik Z."/>
            <person name="Pfeffer P."/>
            <person name="Kralova J."/>
            <person name="Paces J."/>
            <person name="Paces V."/>
            <person name="Kalousova A."/>
            <person name="Cvekl A."/>
        </authorList>
    </citation>
    <scope>NUCLEOTIDE SEQUENCE [MRNA] (ISOFORM 1)</scope>
    <scope>TISSUE SPECIFICITY</scope>
    <scope>DEVELOPMENTAL STAGE</scope>
</reference>
<reference key="2">
    <citation type="journal article" date="1999" name="Dev. Dyn.">
        <title>Mouse Dac, a novel nuclear factor with homology to Drosophila dachshund shows a dynamic expression in the neural crest, the eye, the neocortex, and the limb bud.</title>
        <authorList>
            <person name="Caubit X."/>
            <person name="Thangarajah R."/>
            <person name="Theil T."/>
            <person name="Wirth J."/>
            <person name="Nothwang H.-G."/>
            <person name="Ruether U."/>
            <person name="Krauss S."/>
        </authorList>
    </citation>
    <scope>NUCLEOTIDE SEQUENCE [MRNA] (ISOFORMS 1 AND 2)</scope>
    <scope>DEVELOPMENTAL STAGE</scope>
    <source>
        <tissue>Limb bud</tissue>
    </source>
</reference>
<reference key="3">
    <citation type="journal article" date="1999" name="Dev. Genes Evol.">
        <title>Mouse Dach, a homologue of Drosophila dachshund, is expressed in the developing retina, brain and limbs.</title>
        <authorList>
            <person name="Davis R.J."/>
            <person name="Shen W."/>
            <person name="Heanue T.A."/>
            <person name="Mardon G."/>
        </authorList>
    </citation>
    <scope>NUCLEOTIDE SEQUENCE [MRNA] (ISOFORM 2)</scope>
</reference>
<reference key="4">
    <citation type="journal article" date="2004" name="Genome Res.">
        <title>The status, quality, and expansion of the NIH full-length cDNA project: the Mammalian Gene Collection (MGC).</title>
        <authorList>
            <consortium name="The MGC Project Team"/>
        </authorList>
    </citation>
    <scope>NUCLEOTIDE SEQUENCE [LARGE SCALE MRNA] (ISOFORM 2)</scope>
    <source>
        <tissue>Embryo</tissue>
    </source>
</reference>
<reference key="5">
    <citation type="journal article" date="2005" name="Science">
        <title>The transcriptional landscape of the mammalian genome.</title>
        <authorList>
            <person name="Carninci P."/>
            <person name="Kasukawa T."/>
            <person name="Katayama S."/>
            <person name="Gough J."/>
            <person name="Frith M.C."/>
            <person name="Maeda N."/>
            <person name="Oyama R."/>
            <person name="Ravasi T."/>
            <person name="Lenhard B."/>
            <person name="Wells C."/>
            <person name="Kodzius R."/>
            <person name="Shimokawa K."/>
            <person name="Bajic V.B."/>
            <person name="Brenner S.E."/>
            <person name="Batalov S."/>
            <person name="Forrest A.R."/>
            <person name="Zavolan M."/>
            <person name="Davis M.J."/>
            <person name="Wilming L.G."/>
            <person name="Aidinis V."/>
            <person name="Allen J.E."/>
            <person name="Ambesi-Impiombato A."/>
            <person name="Apweiler R."/>
            <person name="Aturaliya R.N."/>
            <person name="Bailey T.L."/>
            <person name="Bansal M."/>
            <person name="Baxter L."/>
            <person name="Beisel K.W."/>
            <person name="Bersano T."/>
            <person name="Bono H."/>
            <person name="Chalk A.M."/>
            <person name="Chiu K.P."/>
            <person name="Choudhary V."/>
            <person name="Christoffels A."/>
            <person name="Clutterbuck D.R."/>
            <person name="Crowe M.L."/>
            <person name="Dalla E."/>
            <person name="Dalrymple B.P."/>
            <person name="de Bono B."/>
            <person name="Della Gatta G."/>
            <person name="di Bernardo D."/>
            <person name="Down T."/>
            <person name="Engstrom P."/>
            <person name="Fagiolini M."/>
            <person name="Faulkner G."/>
            <person name="Fletcher C.F."/>
            <person name="Fukushima T."/>
            <person name="Furuno M."/>
            <person name="Futaki S."/>
            <person name="Gariboldi M."/>
            <person name="Georgii-Hemming P."/>
            <person name="Gingeras T.R."/>
            <person name="Gojobori T."/>
            <person name="Green R.E."/>
            <person name="Gustincich S."/>
            <person name="Harbers M."/>
            <person name="Hayashi Y."/>
            <person name="Hensch T.K."/>
            <person name="Hirokawa N."/>
            <person name="Hill D."/>
            <person name="Huminiecki L."/>
            <person name="Iacono M."/>
            <person name="Ikeo K."/>
            <person name="Iwama A."/>
            <person name="Ishikawa T."/>
            <person name="Jakt M."/>
            <person name="Kanapin A."/>
            <person name="Katoh M."/>
            <person name="Kawasawa Y."/>
            <person name="Kelso J."/>
            <person name="Kitamura H."/>
            <person name="Kitano H."/>
            <person name="Kollias G."/>
            <person name="Krishnan S.P."/>
            <person name="Kruger A."/>
            <person name="Kummerfeld S.K."/>
            <person name="Kurochkin I.V."/>
            <person name="Lareau L.F."/>
            <person name="Lazarevic D."/>
            <person name="Lipovich L."/>
            <person name="Liu J."/>
            <person name="Liuni S."/>
            <person name="McWilliam S."/>
            <person name="Madan Babu M."/>
            <person name="Madera M."/>
            <person name="Marchionni L."/>
            <person name="Matsuda H."/>
            <person name="Matsuzawa S."/>
            <person name="Miki H."/>
            <person name="Mignone F."/>
            <person name="Miyake S."/>
            <person name="Morris K."/>
            <person name="Mottagui-Tabar S."/>
            <person name="Mulder N."/>
            <person name="Nakano N."/>
            <person name="Nakauchi H."/>
            <person name="Ng P."/>
            <person name="Nilsson R."/>
            <person name="Nishiguchi S."/>
            <person name="Nishikawa S."/>
            <person name="Nori F."/>
            <person name="Ohara O."/>
            <person name="Okazaki Y."/>
            <person name="Orlando V."/>
            <person name="Pang K.C."/>
            <person name="Pavan W.J."/>
            <person name="Pavesi G."/>
            <person name="Pesole G."/>
            <person name="Petrovsky N."/>
            <person name="Piazza S."/>
            <person name="Reed J."/>
            <person name="Reid J.F."/>
            <person name="Ring B.Z."/>
            <person name="Ringwald M."/>
            <person name="Rost B."/>
            <person name="Ruan Y."/>
            <person name="Salzberg S.L."/>
            <person name="Sandelin A."/>
            <person name="Schneider C."/>
            <person name="Schoenbach C."/>
            <person name="Sekiguchi K."/>
            <person name="Semple C.A."/>
            <person name="Seno S."/>
            <person name="Sessa L."/>
            <person name="Sheng Y."/>
            <person name="Shibata Y."/>
            <person name="Shimada H."/>
            <person name="Shimada K."/>
            <person name="Silva D."/>
            <person name="Sinclair B."/>
            <person name="Sperling S."/>
            <person name="Stupka E."/>
            <person name="Sugiura K."/>
            <person name="Sultana R."/>
            <person name="Takenaka Y."/>
            <person name="Taki K."/>
            <person name="Tammoja K."/>
            <person name="Tan S.L."/>
            <person name="Tang S."/>
            <person name="Taylor M.S."/>
            <person name="Tegner J."/>
            <person name="Teichmann S.A."/>
            <person name="Ueda H.R."/>
            <person name="van Nimwegen E."/>
            <person name="Verardo R."/>
            <person name="Wei C.L."/>
            <person name="Yagi K."/>
            <person name="Yamanishi H."/>
            <person name="Zabarovsky E."/>
            <person name="Zhu S."/>
            <person name="Zimmer A."/>
            <person name="Hide W."/>
            <person name="Bult C."/>
            <person name="Grimmond S.M."/>
            <person name="Teasdale R.D."/>
            <person name="Liu E.T."/>
            <person name="Brusic V."/>
            <person name="Quackenbush J."/>
            <person name="Wahlestedt C."/>
            <person name="Mattick J.S."/>
            <person name="Hume D.A."/>
            <person name="Kai C."/>
            <person name="Sasaki D."/>
            <person name="Tomaru Y."/>
            <person name="Fukuda S."/>
            <person name="Kanamori-Katayama M."/>
            <person name="Suzuki M."/>
            <person name="Aoki J."/>
            <person name="Arakawa T."/>
            <person name="Iida J."/>
            <person name="Imamura K."/>
            <person name="Itoh M."/>
            <person name="Kato T."/>
            <person name="Kawaji H."/>
            <person name="Kawagashira N."/>
            <person name="Kawashima T."/>
            <person name="Kojima M."/>
            <person name="Kondo S."/>
            <person name="Konno H."/>
            <person name="Nakano K."/>
            <person name="Ninomiya N."/>
            <person name="Nishio T."/>
            <person name="Okada M."/>
            <person name="Plessy C."/>
            <person name="Shibata K."/>
            <person name="Shiraki T."/>
            <person name="Suzuki S."/>
            <person name="Tagami M."/>
            <person name="Waki K."/>
            <person name="Watahiki A."/>
            <person name="Okamura-Oho Y."/>
            <person name="Suzuki H."/>
            <person name="Kawai J."/>
            <person name="Hayashizaki Y."/>
        </authorList>
    </citation>
    <scope>NUCLEOTIDE SEQUENCE [LARGE SCALE MRNA] OF 113-751 (ISOFORM 2)</scope>
    <source>
        <strain>C57BL/6J</strain>
        <tissue>Cerebellum</tissue>
        <tissue>Eye</tissue>
    </source>
</reference>
<reference key="6">
    <citation type="journal article" date="1998" name="Mech. Dev.">
        <title>Mammalian and Drosophila dachshund genes are related to the Ski proto-oncogene and are expressed in eye and limb.</title>
        <authorList>
            <person name="Hammond K.L."/>
            <person name="Hanson I.M."/>
            <person name="Brown A.G."/>
            <person name="Lettice L.A."/>
            <person name="Hill R.E."/>
        </authorList>
    </citation>
    <scope>NUCLEOTIDE SEQUENCE [MRNA] OF 180-751 (ISOFORM 1)</scope>
    <scope>DEVELOPMENTAL STAGE</scope>
</reference>
<reference key="7">
    <citation type="journal article" date="2002" name="Mol. Cell. Biol.">
        <title>Molecular interaction and synergistic activation of a promoter by Six, Eya, and Dach proteins mediated through CREB binding protein.</title>
        <authorList>
            <person name="Ikeda K."/>
            <person name="Watanabe Y."/>
            <person name="Ohto H."/>
            <person name="Kawakami K."/>
        </authorList>
    </citation>
    <scope>FUNCTION</scope>
    <scope>DNA-BINDING</scope>
</reference>
<reference key="8">
    <citation type="journal article" date="2002" name="Science">
        <title>Tissue-specific regulation of retinal and pituitary precursor cell proliferation.</title>
        <authorList>
            <person name="Li X."/>
            <person name="Perissi V."/>
            <person name="Liu F."/>
            <person name="Rose D.W."/>
            <person name="Rosenfeld M.G."/>
        </authorList>
    </citation>
    <scope>FUNCTION</scope>
    <scope>INTERACTION WITH SIX6; NCOR1; HDAC3 AND SIN3A</scope>
</reference>
<reference key="9">
    <citation type="journal article" date="2003" name="Nature">
        <title>Eya protein phosphatase activity regulates Six1-Dach-Eya transcriptional effects in mammalian organogenesis.</title>
        <authorList>
            <person name="Li X."/>
            <person name="Oghi K.A."/>
            <person name="Zhang J."/>
            <person name="Krones A."/>
            <person name="Bush K.T."/>
            <person name="Glass C.K."/>
            <person name="Nigam S.K."/>
            <person name="Aggarwal A.K."/>
            <person name="Maas R."/>
            <person name="Rose D.W."/>
            <person name="Rosenfeld M.G."/>
        </authorList>
    </citation>
    <scope>FUNCTION</scope>
    <scope>INTERACTION WITH SIX1 AND EYA3</scope>
</reference>
<reference key="10">
    <citation type="journal article" date="2001" name="Genomics">
        <title>Dach: genomic characterization, evaluation as a candidate for postaxial polydactyly type A2, and developmental expression pattern of the mouse homolog.</title>
        <authorList>
            <person name="Ayres J.A."/>
            <person name="Shum L."/>
            <person name="Akarsu A.N."/>
            <person name="Dashner R."/>
            <person name="Takahashi K."/>
            <person name="Ikura T."/>
            <person name="Slavkin H.C."/>
            <person name="Nuckolls G.H."/>
        </authorList>
    </citation>
    <scope>TISSUE SPECIFICITY</scope>
    <scope>DEVELOPMENTAL STAGE</scope>
</reference>
<reference key="11">
    <citation type="journal article" date="2010" name="Cell">
        <title>A tissue-specific atlas of mouse protein phosphorylation and expression.</title>
        <authorList>
            <person name="Huttlin E.L."/>
            <person name="Jedrychowski M.P."/>
            <person name="Elias J.E."/>
            <person name="Goswami T."/>
            <person name="Rad R."/>
            <person name="Beausoleil S.A."/>
            <person name="Villen J."/>
            <person name="Haas W."/>
            <person name="Sowa M.E."/>
            <person name="Gygi S.P."/>
        </authorList>
    </citation>
    <scope>PHOSPHORYLATION [LARGE SCALE ANALYSIS] AT SER-484</scope>
    <scope>IDENTIFICATION BY MASS SPECTROMETRY [LARGE SCALE ANALYSIS]</scope>
    <source>
        <tissue>Kidney</tissue>
        <tissue>Lung</tissue>
    </source>
</reference>